<proteinExistence type="inferred from homology"/>
<gene>
    <name evidence="1" type="primary">rsmH</name>
    <name type="synonym">mraW</name>
    <name type="ordered locus">Balac_1206</name>
</gene>
<organism>
    <name type="scientific">Bifidobacterium animalis subsp. lactis (strain Bl-04 / DGCC2908 / RB 4825 / SD5219)</name>
    <dbReference type="NCBI Taxonomy" id="580050"/>
    <lineage>
        <taxon>Bacteria</taxon>
        <taxon>Bacillati</taxon>
        <taxon>Actinomycetota</taxon>
        <taxon>Actinomycetes</taxon>
        <taxon>Bifidobacteriales</taxon>
        <taxon>Bifidobacteriaceae</taxon>
        <taxon>Bifidobacterium</taxon>
    </lineage>
</organism>
<name>RSMH_BIFLB</name>
<protein>
    <recommendedName>
        <fullName evidence="1">Ribosomal RNA small subunit methyltransferase H</fullName>
        <ecNumber evidence="1">2.1.1.199</ecNumber>
    </recommendedName>
    <alternativeName>
        <fullName evidence="1">16S rRNA m(4)C1402 methyltransferase</fullName>
    </alternativeName>
    <alternativeName>
        <fullName evidence="1">rRNA (cytosine-N(4)-)-methyltransferase RsmH</fullName>
    </alternativeName>
</protein>
<feature type="chain" id="PRO_0000386747" description="Ribosomal RNA small subunit methyltransferase H">
    <location>
        <begin position="1"/>
        <end position="353"/>
    </location>
</feature>
<feature type="region of interest" description="Disordered" evidence="2">
    <location>
        <begin position="334"/>
        <end position="353"/>
    </location>
</feature>
<feature type="compositionally biased region" description="Basic residues" evidence="2">
    <location>
        <begin position="341"/>
        <end position="353"/>
    </location>
</feature>
<feature type="binding site" evidence="1">
    <location>
        <begin position="39"/>
        <end position="41"/>
    </location>
    <ligand>
        <name>S-adenosyl-L-methionine</name>
        <dbReference type="ChEBI" id="CHEBI:59789"/>
    </ligand>
</feature>
<feature type="binding site" evidence="1">
    <location>
        <position position="58"/>
    </location>
    <ligand>
        <name>S-adenosyl-L-methionine</name>
        <dbReference type="ChEBI" id="CHEBI:59789"/>
    </ligand>
</feature>
<feature type="binding site" evidence="1">
    <location>
        <position position="90"/>
    </location>
    <ligand>
        <name>S-adenosyl-L-methionine</name>
        <dbReference type="ChEBI" id="CHEBI:59789"/>
    </ligand>
</feature>
<feature type="binding site" evidence="1">
    <location>
        <position position="108"/>
    </location>
    <ligand>
        <name>S-adenosyl-L-methionine</name>
        <dbReference type="ChEBI" id="CHEBI:59789"/>
    </ligand>
</feature>
<feature type="binding site" evidence="1">
    <location>
        <position position="115"/>
    </location>
    <ligand>
        <name>S-adenosyl-L-methionine</name>
        <dbReference type="ChEBI" id="CHEBI:59789"/>
    </ligand>
</feature>
<keyword id="KW-0963">Cytoplasm</keyword>
<keyword id="KW-0489">Methyltransferase</keyword>
<keyword id="KW-0698">rRNA processing</keyword>
<keyword id="KW-0949">S-adenosyl-L-methionine</keyword>
<keyword id="KW-0808">Transferase</keyword>
<reference key="1">
    <citation type="journal article" date="2009" name="J. Bacteriol.">
        <title>Comparison of the complete genome sequences of Bifidobacterium animalis subsp. lactis DSM 10140 and Bl-04.</title>
        <authorList>
            <person name="Barrangou R."/>
            <person name="Briczinski E.P."/>
            <person name="Traeger L.L."/>
            <person name="Loquasto J.R."/>
            <person name="Richards M."/>
            <person name="Horvath P."/>
            <person name="Coute-Monvoisin A.-C."/>
            <person name="Leyer G."/>
            <person name="Rendulic S."/>
            <person name="Steele J.L."/>
            <person name="Broadbent J.R."/>
            <person name="Oberg T."/>
            <person name="Dudley E.G."/>
            <person name="Schuster S."/>
            <person name="Romero D.A."/>
            <person name="Roberts R.F."/>
        </authorList>
    </citation>
    <scope>NUCLEOTIDE SEQUENCE [LARGE SCALE GENOMIC DNA]</scope>
    <source>
        <strain>Bl-04 / DGCC2908 / RB 4825 / SD5219</strain>
    </source>
</reference>
<dbReference type="EC" id="2.1.1.199" evidence="1"/>
<dbReference type="EMBL" id="CP001515">
    <property type="protein sequence ID" value="ACS46562.1"/>
    <property type="molecule type" value="Genomic_DNA"/>
</dbReference>
<dbReference type="RefSeq" id="WP_004218638.1">
    <property type="nucleotide sequence ID" value="NC_012814.1"/>
</dbReference>
<dbReference type="SMR" id="C6A8W4"/>
<dbReference type="GeneID" id="29696604"/>
<dbReference type="KEGG" id="blc:Balac_1206"/>
<dbReference type="HOGENOM" id="CLU_038422_0_0_11"/>
<dbReference type="GO" id="GO:0005737">
    <property type="term" value="C:cytoplasm"/>
    <property type="evidence" value="ECO:0007669"/>
    <property type="project" value="UniProtKB-SubCell"/>
</dbReference>
<dbReference type="GO" id="GO:0071424">
    <property type="term" value="F:rRNA (cytosine-N4-)-methyltransferase activity"/>
    <property type="evidence" value="ECO:0007669"/>
    <property type="project" value="UniProtKB-UniRule"/>
</dbReference>
<dbReference type="GO" id="GO:0070475">
    <property type="term" value="P:rRNA base methylation"/>
    <property type="evidence" value="ECO:0007669"/>
    <property type="project" value="UniProtKB-UniRule"/>
</dbReference>
<dbReference type="Gene3D" id="1.10.150.170">
    <property type="entry name" value="Putative methyltransferase TM0872, insert domain"/>
    <property type="match status" value="1"/>
</dbReference>
<dbReference type="Gene3D" id="3.40.50.150">
    <property type="entry name" value="Vaccinia Virus protein VP39"/>
    <property type="match status" value="1"/>
</dbReference>
<dbReference type="HAMAP" id="MF_01007">
    <property type="entry name" value="16SrRNA_methyltr_H"/>
    <property type="match status" value="1"/>
</dbReference>
<dbReference type="InterPro" id="IPR002903">
    <property type="entry name" value="RsmH"/>
</dbReference>
<dbReference type="InterPro" id="IPR023397">
    <property type="entry name" value="SAM-dep_MeTrfase_MraW_recog"/>
</dbReference>
<dbReference type="InterPro" id="IPR029063">
    <property type="entry name" value="SAM-dependent_MTases_sf"/>
</dbReference>
<dbReference type="NCBIfam" id="TIGR00006">
    <property type="entry name" value="16S rRNA (cytosine(1402)-N(4))-methyltransferase RsmH"/>
    <property type="match status" value="1"/>
</dbReference>
<dbReference type="PANTHER" id="PTHR11265:SF0">
    <property type="entry name" value="12S RRNA N4-METHYLCYTIDINE METHYLTRANSFERASE"/>
    <property type="match status" value="1"/>
</dbReference>
<dbReference type="PANTHER" id="PTHR11265">
    <property type="entry name" value="S-ADENOSYL-METHYLTRANSFERASE MRAW"/>
    <property type="match status" value="1"/>
</dbReference>
<dbReference type="Pfam" id="PF01795">
    <property type="entry name" value="Methyltransf_5"/>
    <property type="match status" value="1"/>
</dbReference>
<dbReference type="PIRSF" id="PIRSF004486">
    <property type="entry name" value="MraW"/>
    <property type="match status" value="1"/>
</dbReference>
<dbReference type="SUPFAM" id="SSF81799">
    <property type="entry name" value="Putative methyltransferase TM0872, insert domain"/>
    <property type="match status" value="1"/>
</dbReference>
<dbReference type="SUPFAM" id="SSF53335">
    <property type="entry name" value="S-adenosyl-L-methionine-dependent methyltransferases"/>
    <property type="match status" value="1"/>
</dbReference>
<evidence type="ECO:0000255" key="1">
    <source>
        <dbReference type="HAMAP-Rule" id="MF_01007"/>
    </source>
</evidence>
<evidence type="ECO:0000256" key="2">
    <source>
        <dbReference type="SAM" id="MobiDB-lite"/>
    </source>
</evidence>
<sequence>MTDFSQIHKPVLLQECVDLVTPALHASDSVAVDCTLGLAGHTIAFLKAAPNATVIGIDRDEEALDKATARIAQEGLSARFVPVHAAFDQFDEVLRAQGVSRVQAVFMDLGLSSLQIDERERGFSYAHDAPLDMRMDTSQALTAREILATYDADRLAHIFKEYGEERFSKPIAKRIVQQRQSSPLETSSQLTALVDAVIPAARRGSGNPAKRVFQALRIEVNGELDKLRRTLPQIGLHLAVGGRLVVESYHSLEDRTVKNFMAQGLRVDAPADMPVIPPDMQPFFKALTKGAVKADAGEIAYNPRSASVRLRAVELTRPLPQRWVHAFELESQGSEDGVRGAHGHRRRTQARRG</sequence>
<accession>C6A8W4</accession>
<comment type="function">
    <text evidence="1">Specifically methylates the N4 position of cytidine in position 1402 (C1402) of 16S rRNA.</text>
</comment>
<comment type="catalytic activity">
    <reaction evidence="1">
        <text>cytidine(1402) in 16S rRNA + S-adenosyl-L-methionine = N(4)-methylcytidine(1402) in 16S rRNA + S-adenosyl-L-homocysteine + H(+)</text>
        <dbReference type="Rhea" id="RHEA:42928"/>
        <dbReference type="Rhea" id="RHEA-COMP:10286"/>
        <dbReference type="Rhea" id="RHEA-COMP:10287"/>
        <dbReference type="ChEBI" id="CHEBI:15378"/>
        <dbReference type="ChEBI" id="CHEBI:57856"/>
        <dbReference type="ChEBI" id="CHEBI:59789"/>
        <dbReference type="ChEBI" id="CHEBI:74506"/>
        <dbReference type="ChEBI" id="CHEBI:82748"/>
        <dbReference type="EC" id="2.1.1.199"/>
    </reaction>
</comment>
<comment type="subcellular location">
    <subcellularLocation>
        <location evidence="1">Cytoplasm</location>
    </subcellularLocation>
</comment>
<comment type="similarity">
    <text evidence="1">Belongs to the methyltransferase superfamily. RsmH family.</text>
</comment>